<keyword id="KW-0963">Cytoplasm</keyword>
<keyword id="KW-0240">DNA-directed RNA polymerase</keyword>
<keyword id="KW-0548">Nucleotidyltransferase</keyword>
<keyword id="KW-0804">Transcription</keyword>
<keyword id="KW-0808">Transferase</keyword>
<gene>
    <name evidence="1" type="primary">rpo11</name>
    <name evidence="1" type="synonym">rpoL</name>
    <name type="ordered locus">MM_1880</name>
</gene>
<organism>
    <name type="scientific">Methanosarcina mazei (strain ATCC BAA-159 / DSM 3647 / Goe1 / Go1 / JCM 11833 / OCM 88)</name>
    <name type="common">Methanosarcina frisia</name>
    <dbReference type="NCBI Taxonomy" id="192952"/>
    <lineage>
        <taxon>Archaea</taxon>
        <taxon>Methanobacteriati</taxon>
        <taxon>Methanobacteriota</taxon>
        <taxon>Stenosarchaea group</taxon>
        <taxon>Methanomicrobia</taxon>
        <taxon>Methanosarcinales</taxon>
        <taxon>Methanosarcinaceae</taxon>
        <taxon>Methanosarcina</taxon>
    </lineage>
</organism>
<dbReference type="EC" id="2.7.7.6" evidence="1"/>
<dbReference type="EMBL" id="AE008384">
    <property type="protein sequence ID" value="AAM31576.1"/>
    <property type="molecule type" value="Genomic_DNA"/>
</dbReference>
<dbReference type="RefSeq" id="WP_011033815.1">
    <property type="nucleotide sequence ID" value="NC_003901.1"/>
</dbReference>
<dbReference type="SMR" id="Q8PVT0"/>
<dbReference type="KEGG" id="mma:MM_1880"/>
<dbReference type="PATRIC" id="fig|192952.21.peg.2167"/>
<dbReference type="eggNOG" id="arCOG04111">
    <property type="taxonomic scope" value="Archaea"/>
</dbReference>
<dbReference type="HOGENOM" id="CLU_090381_5_3_2"/>
<dbReference type="Proteomes" id="UP000000595">
    <property type="component" value="Chromosome"/>
</dbReference>
<dbReference type="GO" id="GO:0005737">
    <property type="term" value="C:cytoplasm"/>
    <property type="evidence" value="ECO:0007669"/>
    <property type="project" value="UniProtKB-SubCell"/>
</dbReference>
<dbReference type="GO" id="GO:0000428">
    <property type="term" value="C:DNA-directed RNA polymerase complex"/>
    <property type="evidence" value="ECO:0007669"/>
    <property type="project" value="UniProtKB-KW"/>
</dbReference>
<dbReference type="GO" id="GO:0003677">
    <property type="term" value="F:DNA binding"/>
    <property type="evidence" value="ECO:0007669"/>
    <property type="project" value="InterPro"/>
</dbReference>
<dbReference type="GO" id="GO:0003899">
    <property type="term" value="F:DNA-directed RNA polymerase activity"/>
    <property type="evidence" value="ECO:0007669"/>
    <property type="project" value="UniProtKB-UniRule"/>
</dbReference>
<dbReference type="GO" id="GO:0046983">
    <property type="term" value="F:protein dimerization activity"/>
    <property type="evidence" value="ECO:0007669"/>
    <property type="project" value="InterPro"/>
</dbReference>
<dbReference type="GO" id="GO:0006351">
    <property type="term" value="P:DNA-templated transcription"/>
    <property type="evidence" value="ECO:0007669"/>
    <property type="project" value="UniProtKB-UniRule"/>
</dbReference>
<dbReference type="CDD" id="cd06927">
    <property type="entry name" value="RNAP_L"/>
    <property type="match status" value="1"/>
</dbReference>
<dbReference type="Gene3D" id="3.30.1360.10">
    <property type="entry name" value="RNA polymerase, RBP11-like subunit"/>
    <property type="match status" value="1"/>
</dbReference>
<dbReference type="HAMAP" id="MF_00261">
    <property type="entry name" value="RNApol_arch_Rpo11"/>
    <property type="match status" value="1"/>
</dbReference>
<dbReference type="InterPro" id="IPR036603">
    <property type="entry name" value="RBP11-like"/>
</dbReference>
<dbReference type="InterPro" id="IPR009025">
    <property type="entry name" value="RBP11-like_dimer"/>
</dbReference>
<dbReference type="InterPro" id="IPR008193">
    <property type="entry name" value="RNA_pol_Rpb11_13-16kDa_CS"/>
</dbReference>
<dbReference type="InterPro" id="IPR022905">
    <property type="entry name" value="Rpo11-like"/>
</dbReference>
<dbReference type="NCBIfam" id="NF002237">
    <property type="entry name" value="PRK01146.2-1"/>
    <property type="match status" value="1"/>
</dbReference>
<dbReference type="Pfam" id="PF13656">
    <property type="entry name" value="RNA_pol_L_2"/>
    <property type="match status" value="1"/>
</dbReference>
<dbReference type="SUPFAM" id="SSF55257">
    <property type="entry name" value="RBP11-like subunits of RNA polymerase"/>
    <property type="match status" value="1"/>
</dbReference>
<dbReference type="PROSITE" id="PS01154">
    <property type="entry name" value="RNA_POL_L_13KD"/>
    <property type="match status" value="1"/>
</dbReference>
<sequence>MELNILNKTNNELEVELRGETHTLLNLLKDLLIKDERVVTAFYDMKYVSISDPVLYIKTDGADPILVLKDVVAIIVSECDEFIDVFSKAANA</sequence>
<accession>Q8PVT0</accession>
<protein>
    <recommendedName>
        <fullName evidence="1">DNA-directed RNA polymerase subunit Rpo11</fullName>
        <ecNumber evidence="1">2.7.7.6</ecNumber>
    </recommendedName>
    <alternativeName>
        <fullName evidence="1">DNA-directed RNA polymerase subunit L</fullName>
    </alternativeName>
</protein>
<comment type="function">
    <text evidence="1">DNA-dependent RNA polymerase (RNAP) catalyzes the transcription of DNA into RNA using the four ribonucleoside triphosphates as substrates.</text>
</comment>
<comment type="catalytic activity">
    <reaction evidence="1">
        <text>RNA(n) + a ribonucleoside 5'-triphosphate = RNA(n+1) + diphosphate</text>
        <dbReference type="Rhea" id="RHEA:21248"/>
        <dbReference type="Rhea" id="RHEA-COMP:14527"/>
        <dbReference type="Rhea" id="RHEA-COMP:17342"/>
        <dbReference type="ChEBI" id="CHEBI:33019"/>
        <dbReference type="ChEBI" id="CHEBI:61557"/>
        <dbReference type="ChEBI" id="CHEBI:140395"/>
        <dbReference type="EC" id="2.7.7.6"/>
    </reaction>
</comment>
<comment type="subunit">
    <text evidence="1">Part of the RNA polymerase complex.</text>
</comment>
<comment type="subcellular location">
    <subcellularLocation>
        <location evidence="1">Cytoplasm</location>
    </subcellularLocation>
</comment>
<comment type="similarity">
    <text evidence="1">Belongs to the archaeal Rpo11/eukaryotic RPB11/RPC19 RNA polymerase subunit family.</text>
</comment>
<reference key="1">
    <citation type="journal article" date="2002" name="J. Mol. Microbiol. Biotechnol.">
        <title>The genome of Methanosarcina mazei: evidence for lateral gene transfer between Bacteria and Archaea.</title>
        <authorList>
            <person name="Deppenmeier U."/>
            <person name="Johann A."/>
            <person name="Hartsch T."/>
            <person name="Merkl R."/>
            <person name="Schmitz R.A."/>
            <person name="Martinez-Arias R."/>
            <person name="Henne A."/>
            <person name="Wiezer A."/>
            <person name="Baeumer S."/>
            <person name="Jacobi C."/>
            <person name="Brueggemann H."/>
            <person name="Lienard T."/>
            <person name="Christmann A."/>
            <person name="Boemecke M."/>
            <person name="Steckel S."/>
            <person name="Bhattacharyya A."/>
            <person name="Lykidis A."/>
            <person name="Overbeek R."/>
            <person name="Klenk H.-P."/>
            <person name="Gunsalus R.P."/>
            <person name="Fritz H.-J."/>
            <person name="Gottschalk G."/>
        </authorList>
    </citation>
    <scope>NUCLEOTIDE SEQUENCE [LARGE SCALE GENOMIC DNA]</scope>
    <source>
        <strain>ATCC BAA-159 / DSM 3647 / Goe1 / Go1 / JCM 11833 / OCM 88</strain>
    </source>
</reference>
<name>RPO11_METMA</name>
<feature type="chain" id="PRO_0000149328" description="DNA-directed RNA polymerase subunit Rpo11">
    <location>
        <begin position="1"/>
        <end position="92"/>
    </location>
</feature>
<evidence type="ECO:0000255" key="1">
    <source>
        <dbReference type="HAMAP-Rule" id="MF_00261"/>
    </source>
</evidence>
<proteinExistence type="inferred from homology"/>